<organism>
    <name type="scientific">Vibrio cholerae serotype O1 (strain M66-2)</name>
    <dbReference type="NCBI Taxonomy" id="579112"/>
    <lineage>
        <taxon>Bacteria</taxon>
        <taxon>Pseudomonadati</taxon>
        <taxon>Pseudomonadota</taxon>
        <taxon>Gammaproteobacteria</taxon>
        <taxon>Vibrionales</taxon>
        <taxon>Vibrionaceae</taxon>
        <taxon>Vibrio</taxon>
    </lineage>
</organism>
<protein>
    <recommendedName>
        <fullName evidence="1">UPF0253 protein VCM66_0829</fullName>
    </recommendedName>
</protein>
<accession>C3LTC2</accession>
<gene>
    <name type="ordered locus">VCM66_0829</name>
</gene>
<reference key="1">
    <citation type="journal article" date="2008" name="PLoS ONE">
        <title>A recalibrated molecular clock and independent origins for the cholera pandemic clones.</title>
        <authorList>
            <person name="Feng L."/>
            <person name="Reeves P.R."/>
            <person name="Lan R."/>
            <person name="Ren Y."/>
            <person name="Gao C."/>
            <person name="Zhou Z."/>
            <person name="Ren Y."/>
            <person name="Cheng J."/>
            <person name="Wang W."/>
            <person name="Wang J."/>
            <person name="Qian W."/>
            <person name="Li D."/>
            <person name="Wang L."/>
        </authorList>
    </citation>
    <scope>NUCLEOTIDE SEQUENCE [LARGE SCALE GENOMIC DNA]</scope>
    <source>
        <strain>M66-2</strain>
    </source>
</reference>
<name>Y829_VIBCM</name>
<comment type="similarity">
    <text evidence="1">Belongs to the UPF0253 family.</text>
</comment>
<dbReference type="EMBL" id="CP001233">
    <property type="protein sequence ID" value="ACP05148.1"/>
    <property type="molecule type" value="Genomic_DNA"/>
</dbReference>
<dbReference type="RefSeq" id="WP_000870111.1">
    <property type="nucleotide sequence ID" value="NC_012578.1"/>
</dbReference>
<dbReference type="SMR" id="C3LTC2"/>
<dbReference type="KEGG" id="vcm:VCM66_0829"/>
<dbReference type="HOGENOM" id="CLU_190008_0_0_6"/>
<dbReference type="Proteomes" id="UP000001217">
    <property type="component" value="Chromosome I"/>
</dbReference>
<dbReference type="HAMAP" id="MF_01064">
    <property type="entry name" value="UPF0253"/>
    <property type="match status" value="1"/>
</dbReference>
<dbReference type="InterPro" id="IPR009624">
    <property type="entry name" value="UPF0253"/>
</dbReference>
<dbReference type="NCBIfam" id="NF003436">
    <property type="entry name" value="PRK04964.1"/>
    <property type="match status" value="1"/>
</dbReference>
<dbReference type="Pfam" id="PF06786">
    <property type="entry name" value="UPF0253"/>
    <property type="match status" value="1"/>
</dbReference>
<evidence type="ECO:0000255" key="1">
    <source>
        <dbReference type="HAMAP-Rule" id="MF_01064"/>
    </source>
</evidence>
<sequence length="67" mass="7179">MKVYDCCELVRELYAQIGSGDQGYIPQAISCAVRALNEIAADTALPLAAREKAAFAAANLLISDFED</sequence>
<feature type="chain" id="PRO_1000149729" description="UPF0253 protein VCM66_0829">
    <location>
        <begin position="1"/>
        <end position="67"/>
    </location>
</feature>
<proteinExistence type="inferred from homology"/>